<protein>
    <recommendedName>
        <fullName>NADH-cytochrome b5 reductase 1</fullName>
        <shortName>b5R.1</shortName>
        <ecNumber>1.6.2.2</ecNumber>
    </recommendedName>
    <alternativeName>
        <fullName>Humb5R2</fullName>
    </alternativeName>
    <alternativeName>
        <fullName>NAD(P)H:quinone oxidoreductase type 3 polypeptide A2</fullName>
    </alternativeName>
</protein>
<accession>Q9UHQ9</accession>
<accession>A0PK21</accession>
<accession>B2R8E0</accession>
<accession>O95329</accession>
<accession>Q53F73</accession>
<accession>Q8NCL5</accession>
<accession>Q9UHJ1</accession>
<reference key="1">
    <citation type="journal article" date="1999" name="Proc. Natl. Acad. Sci. U.S.A.">
        <title>Identification of a cytochrome b-type NAD(P)H oxidoreductase ubiquitously expressed in human cells.</title>
        <authorList>
            <person name="Zhu H."/>
            <person name="Qiu H."/>
            <person name="Yoon H.-W."/>
            <person name="Huang S."/>
            <person name="Bunn H.F."/>
        </authorList>
    </citation>
    <scope>NUCLEOTIDE SEQUENCE [MRNA]</scope>
    <scope>TISSUE SPECIFICITY</scope>
</reference>
<reference key="2">
    <citation type="submission" date="1998-09" db="EMBL/GenBank/DDBJ databases">
        <title>Cloning of a new human cDNA homology to human NADH-cytochrome-b5 reductase mRNA.</title>
        <authorList>
            <person name="Xu Z.G."/>
            <person name="Yu L."/>
            <person name="Yue P."/>
            <person name="Tu Q."/>
            <person name="Zheng L.H."/>
            <person name="Zhao S.Y."/>
        </authorList>
    </citation>
    <scope>NUCLEOTIDE SEQUENCE [MRNA]</scope>
</reference>
<reference key="3">
    <citation type="journal article" date="2003" name="Genome Res.">
        <title>The secreted protein discovery initiative (SPDI), a large-scale effort to identify novel human secreted and transmembrane proteins: a bioinformatics assessment.</title>
        <authorList>
            <person name="Clark H.F."/>
            <person name="Gurney A.L."/>
            <person name="Abaya E."/>
            <person name="Baker K."/>
            <person name="Baldwin D.T."/>
            <person name="Brush J."/>
            <person name="Chen J."/>
            <person name="Chow B."/>
            <person name="Chui C."/>
            <person name="Crowley C."/>
            <person name="Currell B."/>
            <person name="Deuel B."/>
            <person name="Dowd P."/>
            <person name="Eaton D."/>
            <person name="Foster J.S."/>
            <person name="Grimaldi C."/>
            <person name="Gu Q."/>
            <person name="Hass P.E."/>
            <person name="Heldens S."/>
            <person name="Huang A."/>
            <person name="Kim H.S."/>
            <person name="Klimowski L."/>
            <person name="Jin Y."/>
            <person name="Johnson S."/>
            <person name="Lee J."/>
            <person name="Lewis L."/>
            <person name="Liao D."/>
            <person name="Mark M.R."/>
            <person name="Robbie E."/>
            <person name="Sanchez C."/>
            <person name="Schoenfeld J."/>
            <person name="Seshagiri S."/>
            <person name="Simmons L."/>
            <person name="Singh J."/>
            <person name="Smith V."/>
            <person name="Stinson J."/>
            <person name="Vagts A."/>
            <person name="Vandlen R.L."/>
            <person name="Watanabe C."/>
            <person name="Wieand D."/>
            <person name="Woods K."/>
            <person name="Xie M.-H."/>
            <person name="Yansura D.G."/>
            <person name="Yi S."/>
            <person name="Yu G."/>
            <person name="Yuan J."/>
            <person name="Zhang M."/>
            <person name="Zhang Z."/>
            <person name="Goddard A.D."/>
            <person name="Wood W.I."/>
            <person name="Godowski P.J."/>
            <person name="Gray A.M."/>
        </authorList>
    </citation>
    <scope>NUCLEOTIDE SEQUENCE [LARGE SCALE MRNA]</scope>
</reference>
<reference key="4">
    <citation type="journal article" date="2004" name="Nat. Genet.">
        <title>Complete sequencing and characterization of 21,243 full-length human cDNAs.</title>
        <authorList>
            <person name="Ota T."/>
            <person name="Suzuki Y."/>
            <person name="Nishikawa T."/>
            <person name="Otsuki T."/>
            <person name="Sugiyama T."/>
            <person name="Irie R."/>
            <person name="Wakamatsu A."/>
            <person name="Hayashi K."/>
            <person name="Sato H."/>
            <person name="Nagai K."/>
            <person name="Kimura K."/>
            <person name="Makita H."/>
            <person name="Sekine M."/>
            <person name="Obayashi M."/>
            <person name="Nishi T."/>
            <person name="Shibahara T."/>
            <person name="Tanaka T."/>
            <person name="Ishii S."/>
            <person name="Yamamoto J."/>
            <person name="Saito K."/>
            <person name="Kawai Y."/>
            <person name="Isono Y."/>
            <person name="Nakamura Y."/>
            <person name="Nagahari K."/>
            <person name="Murakami K."/>
            <person name="Yasuda T."/>
            <person name="Iwayanagi T."/>
            <person name="Wagatsuma M."/>
            <person name="Shiratori A."/>
            <person name="Sudo H."/>
            <person name="Hosoiri T."/>
            <person name="Kaku Y."/>
            <person name="Kodaira H."/>
            <person name="Kondo H."/>
            <person name="Sugawara M."/>
            <person name="Takahashi M."/>
            <person name="Kanda K."/>
            <person name="Yokoi T."/>
            <person name="Furuya T."/>
            <person name="Kikkawa E."/>
            <person name="Omura Y."/>
            <person name="Abe K."/>
            <person name="Kamihara K."/>
            <person name="Katsuta N."/>
            <person name="Sato K."/>
            <person name="Tanikawa M."/>
            <person name="Yamazaki M."/>
            <person name="Ninomiya K."/>
            <person name="Ishibashi T."/>
            <person name="Yamashita H."/>
            <person name="Murakawa K."/>
            <person name="Fujimori K."/>
            <person name="Tanai H."/>
            <person name="Kimata M."/>
            <person name="Watanabe M."/>
            <person name="Hiraoka S."/>
            <person name="Chiba Y."/>
            <person name="Ishida S."/>
            <person name="Ono Y."/>
            <person name="Takiguchi S."/>
            <person name="Watanabe S."/>
            <person name="Yosida M."/>
            <person name="Hotuta T."/>
            <person name="Kusano J."/>
            <person name="Kanehori K."/>
            <person name="Takahashi-Fujii A."/>
            <person name="Hara H."/>
            <person name="Tanase T.-O."/>
            <person name="Nomura Y."/>
            <person name="Togiya S."/>
            <person name="Komai F."/>
            <person name="Hara R."/>
            <person name="Takeuchi K."/>
            <person name="Arita M."/>
            <person name="Imose N."/>
            <person name="Musashino K."/>
            <person name="Yuuki H."/>
            <person name="Oshima A."/>
            <person name="Sasaki N."/>
            <person name="Aotsuka S."/>
            <person name="Yoshikawa Y."/>
            <person name="Matsunawa H."/>
            <person name="Ichihara T."/>
            <person name="Shiohata N."/>
            <person name="Sano S."/>
            <person name="Moriya S."/>
            <person name="Momiyama H."/>
            <person name="Satoh N."/>
            <person name="Takami S."/>
            <person name="Terashima Y."/>
            <person name="Suzuki O."/>
            <person name="Nakagawa S."/>
            <person name="Senoh A."/>
            <person name="Mizoguchi H."/>
            <person name="Goto Y."/>
            <person name="Shimizu F."/>
            <person name="Wakebe H."/>
            <person name="Hishigaki H."/>
            <person name="Watanabe T."/>
            <person name="Sugiyama A."/>
            <person name="Takemoto M."/>
            <person name="Kawakami B."/>
            <person name="Yamazaki M."/>
            <person name="Watanabe K."/>
            <person name="Kumagai A."/>
            <person name="Itakura S."/>
            <person name="Fukuzumi Y."/>
            <person name="Fujimori Y."/>
            <person name="Komiyama M."/>
            <person name="Tashiro H."/>
            <person name="Tanigami A."/>
            <person name="Fujiwara T."/>
            <person name="Ono T."/>
            <person name="Yamada K."/>
            <person name="Fujii Y."/>
            <person name="Ozaki K."/>
            <person name="Hirao M."/>
            <person name="Ohmori Y."/>
            <person name="Kawabata A."/>
            <person name="Hikiji T."/>
            <person name="Kobatake N."/>
            <person name="Inagaki H."/>
            <person name="Ikema Y."/>
            <person name="Okamoto S."/>
            <person name="Okitani R."/>
            <person name="Kawakami T."/>
            <person name="Noguchi S."/>
            <person name="Itoh T."/>
            <person name="Shigeta K."/>
            <person name="Senba T."/>
            <person name="Matsumura K."/>
            <person name="Nakajima Y."/>
            <person name="Mizuno T."/>
            <person name="Morinaga M."/>
            <person name="Sasaki M."/>
            <person name="Togashi T."/>
            <person name="Oyama M."/>
            <person name="Hata H."/>
            <person name="Watanabe M."/>
            <person name="Komatsu T."/>
            <person name="Mizushima-Sugano J."/>
            <person name="Satoh T."/>
            <person name="Shirai Y."/>
            <person name="Takahashi Y."/>
            <person name="Nakagawa K."/>
            <person name="Okumura K."/>
            <person name="Nagase T."/>
            <person name="Nomura N."/>
            <person name="Kikuchi H."/>
            <person name="Masuho Y."/>
            <person name="Yamashita R."/>
            <person name="Nakai K."/>
            <person name="Yada T."/>
            <person name="Nakamura Y."/>
            <person name="Ohara O."/>
            <person name="Isogai T."/>
            <person name="Sugano S."/>
        </authorList>
    </citation>
    <scope>NUCLEOTIDE SEQUENCE [LARGE SCALE MRNA]</scope>
    <source>
        <tissue>Testis</tissue>
    </source>
</reference>
<reference key="5">
    <citation type="journal article" date="2005" name="DNA Res.">
        <title>Signal sequence and keyword trap in silico for selection of full-length human cDNAs encoding secretion or membrane proteins from oligo-capped cDNA libraries.</title>
        <authorList>
            <person name="Otsuki T."/>
            <person name="Ota T."/>
            <person name="Nishikawa T."/>
            <person name="Hayashi K."/>
            <person name="Suzuki Y."/>
            <person name="Yamamoto J."/>
            <person name="Wakamatsu A."/>
            <person name="Kimura K."/>
            <person name="Sakamoto K."/>
            <person name="Hatano N."/>
            <person name="Kawai Y."/>
            <person name="Ishii S."/>
            <person name="Saito K."/>
            <person name="Kojima S."/>
            <person name="Sugiyama T."/>
            <person name="Ono T."/>
            <person name="Okano K."/>
            <person name="Yoshikawa Y."/>
            <person name="Aotsuka S."/>
            <person name="Sasaki N."/>
            <person name="Hattori A."/>
            <person name="Okumura K."/>
            <person name="Nagai K."/>
            <person name="Sugano S."/>
            <person name="Isogai T."/>
        </authorList>
    </citation>
    <scope>NUCLEOTIDE SEQUENCE [LARGE SCALE MRNA]</scope>
</reference>
<reference key="6">
    <citation type="submission" date="1999-02" db="EMBL/GenBank/DDBJ databases">
        <title>A novel gene expressed in human adrenal gland.</title>
        <authorList>
            <person name="Peng Y."/>
            <person name="Gu Y."/>
            <person name="Li Y."/>
            <person name="Fu S."/>
            <person name="Gu J."/>
            <person name="Zhang L."/>
            <person name="Jiang C."/>
            <person name="Yu Y."/>
            <person name="Fu G."/>
            <person name="Wang Y."/>
            <person name="Chen Z."/>
            <person name="Han Z."/>
        </authorList>
    </citation>
    <scope>NUCLEOTIDE SEQUENCE [LARGE SCALE MRNA]</scope>
    <source>
        <tissue>Adrenal gland</tissue>
    </source>
</reference>
<reference key="7">
    <citation type="submission" date="2005-04" db="EMBL/GenBank/DDBJ databases">
        <authorList>
            <person name="Totoki Y."/>
            <person name="Toyoda A."/>
            <person name="Takeda T."/>
            <person name="Sakaki Y."/>
            <person name="Tanaka A."/>
            <person name="Yokoyama S."/>
        </authorList>
    </citation>
    <scope>NUCLEOTIDE SEQUENCE [LARGE SCALE MRNA]</scope>
    <source>
        <tissue>Colon</tissue>
    </source>
</reference>
<reference key="8">
    <citation type="submission" date="2005-07" db="EMBL/GenBank/DDBJ databases">
        <authorList>
            <person name="Mural R.J."/>
            <person name="Istrail S."/>
            <person name="Sutton G.G."/>
            <person name="Florea L."/>
            <person name="Halpern A.L."/>
            <person name="Mobarry C.M."/>
            <person name="Lippert R."/>
            <person name="Walenz B."/>
            <person name="Shatkay H."/>
            <person name="Dew I."/>
            <person name="Miller J.R."/>
            <person name="Flanigan M.J."/>
            <person name="Edwards N.J."/>
            <person name="Bolanos R."/>
            <person name="Fasulo D."/>
            <person name="Halldorsson B.V."/>
            <person name="Hannenhalli S."/>
            <person name="Turner R."/>
            <person name="Yooseph S."/>
            <person name="Lu F."/>
            <person name="Nusskern D.R."/>
            <person name="Shue B.C."/>
            <person name="Zheng X.H."/>
            <person name="Zhong F."/>
            <person name="Delcher A.L."/>
            <person name="Huson D.H."/>
            <person name="Kravitz S.A."/>
            <person name="Mouchard L."/>
            <person name="Reinert K."/>
            <person name="Remington K.A."/>
            <person name="Clark A.G."/>
            <person name="Waterman M.S."/>
            <person name="Eichler E.E."/>
            <person name="Adams M.D."/>
            <person name="Hunkapiller M.W."/>
            <person name="Myers E.W."/>
            <person name="Venter J.C."/>
        </authorList>
    </citation>
    <scope>NUCLEOTIDE SEQUENCE [LARGE SCALE GENOMIC DNA]</scope>
</reference>
<reference key="9">
    <citation type="journal article" date="2004" name="Genome Res.">
        <title>The status, quality, and expansion of the NIH full-length cDNA project: the Mammalian Gene Collection (MGC).</title>
        <authorList>
            <consortium name="The MGC Project Team"/>
        </authorList>
    </citation>
    <scope>NUCLEOTIDE SEQUENCE [LARGE SCALE MRNA]</scope>
    <source>
        <tissue>Lung</tissue>
    </source>
</reference>
<reference key="10">
    <citation type="submission" date="1998-08" db="EMBL/GenBank/DDBJ databases">
        <title>Full-insert sequence of mapped XREF EST.</title>
        <authorList>
            <person name="Barrow I.K.-P."/>
            <person name="Boguski M.S."/>
            <person name="Touchman J."/>
            <person name="Spencer F."/>
        </authorList>
    </citation>
    <scope>NUCLEOTIDE SEQUENCE [LARGE SCALE MRNA] OF 172-305</scope>
</reference>
<reference key="11">
    <citation type="submission" date="2005-11" db="UniProtKB">
        <authorList>
            <person name="Bienvenut W.V."/>
            <person name="Claeys D."/>
        </authorList>
    </citation>
    <scope>PROTEIN SEQUENCE OF 66-81 AND 140-158</scope>
    <scope>IDENTIFICATION BY MASS SPECTROMETRY</scope>
    <source>
        <tissue>Platelet</tissue>
    </source>
</reference>
<reference key="12">
    <citation type="journal article" date="2011" name="BMC Syst. Biol.">
        <title>Initial characterization of the human central proteome.</title>
        <authorList>
            <person name="Burkard T.R."/>
            <person name="Planyavsky M."/>
            <person name="Kaupe I."/>
            <person name="Breitwieser F.P."/>
            <person name="Buerckstuemmer T."/>
            <person name="Bennett K.L."/>
            <person name="Superti-Furga G."/>
            <person name="Colinge J."/>
        </authorList>
    </citation>
    <scope>IDENTIFICATION BY MASS SPECTROMETRY [LARGE SCALE ANALYSIS]</scope>
</reference>
<reference key="13">
    <citation type="journal article" date="2015" name="Proteomics">
        <title>N-terminome analysis of the human mitochondrial proteome.</title>
        <authorList>
            <person name="Vaca Jacome A.S."/>
            <person name="Rabilloud T."/>
            <person name="Schaeffer-Reiss C."/>
            <person name="Rompais M."/>
            <person name="Ayoub D."/>
            <person name="Lane L."/>
            <person name="Bairoch A."/>
            <person name="Van Dorsselaer A."/>
            <person name="Carapito C."/>
        </authorList>
    </citation>
    <scope>IDENTIFICATION BY MASS SPECTROMETRY [LARGE SCALE ANALYSIS]</scope>
</reference>
<evidence type="ECO:0000250" key="1"/>
<evidence type="ECO:0000255" key="2"/>
<evidence type="ECO:0000255" key="3">
    <source>
        <dbReference type="PROSITE-ProRule" id="PRU00716"/>
    </source>
</evidence>
<evidence type="ECO:0000269" key="4">
    <source>
    </source>
</evidence>
<evidence type="ECO:0000305" key="5"/>
<name>NB5R1_HUMAN</name>
<proteinExistence type="evidence at protein level"/>
<organism>
    <name type="scientific">Homo sapiens</name>
    <name type="common">Human</name>
    <dbReference type="NCBI Taxonomy" id="9606"/>
    <lineage>
        <taxon>Eukaryota</taxon>
        <taxon>Metazoa</taxon>
        <taxon>Chordata</taxon>
        <taxon>Craniata</taxon>
        <taxon>Vertebrata</taxon>
        <taxon>Euteleostomi</taxon>
        <taxon>Mammalia</taxon>
        <taxon>Eutheria</taxon>
        <taxon>Euarchontoglires</taxon>
        <taxon>Primates</taxon>
        <taxon>Haplorrhini</taxon>
        <taxon>Catarrhini</taxon>
        <taxon>Hominidae</taxon>
        <taxon>Homo</taxon>
    </lineage>
</organism>
<dbReference type="EC" id="1.6.2.2"/>
<dbReference type="EMBL" id="AF169481">
    <property type="protein sequence ID" value="AAF06147.1"/>
    <property type="molecule type" value="mRNA"/>
</dbReference>
<dbReference type="EMBL" id="AF087912">
    <property type="protein sequence ID" value="AAP97209.1"/>
    <property type="molecule type" value="mRNA"/>
</dbReference>
<dbReference type="EMBL" id="AF093822">
    <property type="protein sequence ID" value="AAP97218.1"/>
    <property type="molecule type" value="mRNA"/>
</dbReference>
<dbReference type="EMBL" id="AY359026">
    <property type="protein sequence ID" value="AAQ89385.1"/>
    <property type="molecule type" value="mRNA"/>
</dbReference>
<dbReference type="EMBL" id="AK074654">
    <property type="protein sequence ID" value="BAC11115.1"/>
    <property type="molecule type" value="mRNA"/>
</dbReference>
<dbReference type="EMBL" id="AF125533">
    <property type="protein sequence ID" value="AAF17227.1"/>
    <property type="molecule type" value="mRNA"/>
</dbReference>
<dbReference type="EMBL" id="AK223416">
    <property type="protein sequence ID" value="BAD97136.1"/>
    <property type="molecule type" value="mRNA"/>
</dbReference>
<dbReference type="EMBL" id="AK313333">
    <property type="protein sequence ID" value="BAG36137.1"/>
    <property type="molecule type" value="mRNA"/>
</dbReference>
<dbReference type="EMBL" id="CH471067">
    <property type="protein sequence ID" value="EAW91452.1"/>
    <property type="molecule type" value="Genomic_DNA"/>
</dbReference>
<dbReference type="EMBL" id="BC018732">
    <property type="protein sequence ID" value="AAH18732.1"/>
    <property type="molecule type" value="mRNA"/>
</dbReference>
<dbReference type="EMBL" id="BC127945">
    <property type="protein sequence ID" value="AAI27946.1"/>
    <property type="status" value="ALT_INIT"/>
    <property type="molecule type" value="mRNA"/>
</dbReference>
<dbReference type="EMBL" id="AF091084">
    <property type="protein sequence ID" value="AAC72953.1"/>
    <property type="status" value="ALT_INIT"/>
    <property type="molecule type" value="mRNA"/>
</dbReference>
<dbReference type="CCDS" id="CCDS1431.1"/>
<dbReference type="RefSeq" id="NP_057327.2">
    <property type="nucleotide sequence ID" value="NM_016243.2"/>
</dbReference>
<dbReference type="SMR" id="Q9UHQ9"/>
<dbReference type="BioGRID" id="119690">
    <property type="interactions" value="131"/>
</dbReference>
<dbReference type="FunCoup" id="Q9UHQ9">
    <property type="interactions" value="1922"/>
</dbReference>
<dbReference type="IntAct" id="Q9UHQ9">
    <property type="interactions" value="68"/>
</dbReference>
<dbReference type="MINT" id="Q9UHQ9"/>
<dbReference type="STRING" id="9606.ENSP00000356218"/>
<dbReference type="DrugBank" id="DB03147">
    <property type="generic name" value="Flavin adenine dinucleotide"/>
</dbReference>
<dbReference type="CarbonylDB" id="Q9UHQ9"/>
<dbReference type="GlyGen" id="Q9UHQ9">
    <property type="glycosylation" value="2 sites, 1 O-linked glycan (2 sites)"/>
</dbReference>
<dbReference type="iPTMnet" id="Q9UHQ9"/>
<dbReference type="PhosphoSitePlus" id="Q9UHQ9"/>
<dbReference type="SwissPalm" id="Q9UHQ9"/>
<dbReference type="BioMuta" id="CYB5R1"/>
<dbReference type="DMDM" id="74761957"/>
<dbReference type="jPOST" id="Q9UHQ9"/>
<dbReference type="MassIVE" id="Q9UHQ9"/>
<dbReference type="PaxDb" id="9606-ENSP00000356218"/>
<dbReference type="PeptideAtlas" id="Q9UHQ9"/>
<dbReference type="ProteomicsDB" id="84401"/>
<dbReference type="Pumba" id="Q9UHQ9"/>
<dbReference type="Antibodypedia" id="2536">
    <property type="antibodies" value="276 antibodies from 28 providers"/>
</dbReference>
<dbReference type="DNASU" id="51706"/>
<dbReference type="Ensembl" id="ENST00000367249.9">
    <property type="protein sequence ID" value="ENSP00000356218.4"/>
    <property type="gene ID" value="ENSG00000159348.13"/>
</dbReference>
<dbReference type="GeneID" id="51706"/>
<dbReference type="KEGG" id="hsa:51706"/>
<dbReference type="MANE-Select" id="ENST00000367249.9">
    <property type="protein sequence ID" value="ENSP00000356218.4"/>
    <property type="RefSeq nucleotide sequence ID" value="NM_016243.3"/>
    <property type="RefSeq protein sequence ID" value="NP_057327.2"/>
</dbReference>
<dbReference type="UCSC" id="uc001gyt.3">
    <property type="organism name" value="human"/>
</dbReference>
<dbReference type="AGR" id="HGNC:13397"/>
<dbReference type="CTD" id="51706"/>
<dbReference type="DisGeNET" id="51706"/>
<dbReference type="GeneCards" id="CYB5R1"/>
<dbReference type="HGNC" id="HGNC:13397">
    <property type="gene designation" value="CYB5R1"/>
</dbReference>
<dbReference type="HPA" id="ENSG00000159348">
    <property type="expression patterns" value="Tissue enhanced (skeletal)"/>
</dbReference>
<dbReference type="MIM" id="608341">
    <property type="type" value="gene"/>
</dbReference>
<dbReference type="neXtProt" id="NX_Q9UHQ9"/>
<dbReference type="OpenTargets" id="ENSG00000159348"/>
<dbReference type="PharmGKB" id="PA134979668"/>
<dbReference type="VEuPathDB" id="HostDB:ENSG00000159348"/>
<dbReference type="eggNOG" id="KOG0534">
    <property type="taxonomic scope" value="Eukaryota"/>
</dbReference>
<dbReference type="GeneTree" id="ENSGT00940000160784"/>
<dbReference type="HOGENOM" id="CLU_003827_9_2_1"/>
<dbReference type="InParanoid" id="Q9UHQ9"/>
<dbReference type="OMA" id="CLDPENW"/>
<dbReference type="OrthoDB" id="432685at2759"/>
<dbReference type="PAN-GO" id="Q9UHQ9">
    <property type="GO annotations" value="1 GO annotation based on evolutionary models"/>
</dbReference>
<dbReference type="PhylomeDB" id="Q9UHQ9"/>
<dbReference type="TreeFam" id="TF314333"/>
<dbReference type="PathwayCommons" id="Q9UHQ9"/>
<dbReference type="Reactome" id="R-HSA-114608">
    <property type="pathway name" value="Platelet degranulation"/>
</dbReference>
<dbReference type="Reactome" id="R-HSA-1237044">
    <property type="pathway name" value="Erythrocytes take up carbon dioxide and release oxygen"/>
</dbReference>
<dbReference type="SignaLink" id="Q9UHQ9"/>
<dbReference type="BioGRID-ORCS" id="51706">
    <property type="hits" value="11 hits in 1161 CRISPR screens"/>
</dbReference>
<dbReference type="CD-CODE" id="91857CE7">
    <property type="entry name" value="Nucleolus"/>
</dbReference>
<dbReference type="CD-CODE" id="FB4E32DD">
    <property type="entry name" value="Presynaptic clusters and postsynaptic densities"/>
</dbReference>
<dbReference type="ChiTaRS" id="CYB5R1">
    <property type="organism name" value="human"/>
</dbReference>
<dbReference type="GeneWiki" id="CYB5R1"/>
<dbReference type="GenomeRNAi" id="51706"/>
<dbReference type="Pharos" id="Q9UHQ9">
    <property type="development level" value="Tbio"/>
</dbReference>
<dbReference type="PRO" id="PR:Q9UHQ9"/>
<dbReference type="Proteomes" id="UP000005640">
    <property type="component" value="Chromosome 1"/>
</dbReference>
<dbReference type="RNAct" id="Q9UHQ9">
    <property type="molecule type" value="protein"/>
</dbReference>
<dbReference type="Bgee" id="ENSG00000159348">
    <property type="expression patterns" value="Expressed in skeletal muscle tissue of biceps brachii and 203 other cell types or tissues"/>
</dbReference>
<dbReference type="ExpressionAtlas" id="Q9UHQ9">
    <property type="expression patterns" value="baseline and differential"/>
</dbReference>
<dbReference type="GO" id="GO:0005829">
    <property type="term" value="C:cytosol"/>
    <property type="evidence" value="ECO:0000314"/>
    <property type="project" value="HPA"/>
</dbReference>
<dbReference type="GO" id="GO:0005789">
    <property type="term" value="C:endoplasmic reticulum membrane"/>
    <property type="evidence" value="ECO:0000304"/>
    <property type="project" value="Reactome"/>
</dbReference>
<dbReference type="GO" id="GO:0070062">
    <property type="term" value="C:extracellular exosome"/>
    <property type="evidence" value="ECO:0007005"/>
    <property type="project" value="UniProtKB"/>
</dbReference>
<dbReference type="GO" id="GO:0016020">
    <property type="term" value="C:membrane"/>
    <property type="evidence" value="ECO:0007005"/>
    <property type="project" value="UniProtKB"/>
</dbReference>
<dbReference type="GO" id="GO:0005739">
    <property type="term" value="C:mitochondrion"/>
    <property type="evidence" value="ECO:0000314"/>
    <property type="project" value="HPA"/>
</dbReference>
<dbReference type="GO" id="GO:0005886">
    <property type="term" value="C:plasma membrane"/>
    <property type="evidence" value="ECO:0000304"/>
    <property type="project" value="Reactome"/>
</dbReference>
<dbReference type="GO" id="GO:0031092">
    <property type="term" value="C:platelet alpha granule membrane"/>
    <property type="evidence" value="ECO:0000304"/>
    <property type="project" value="Reactome"/>
</dbReference>
<dbReference type="GO" id="GO:0004128">
    <property type="term" value="F:cytochrome-b5 reductase activity, acting on NAD(P)H"/>
    <property type="evidence" value="ECO:0000304"/>
    <property type="project" value="Reactome"/>
</dbReference>
<dbReference type="GO" id="GO:0071949">
    <property type="term" value="F:FAD binding"/>
    <property type="evidence" value="ECO:0000318"/>
    <property type="project" value="GO_Central"/>
</dbReference>
<dbReference type="GO" id="GO:0015701">
    <property type="term" value="P:bicarbonate transport"/>
    <property type="evidence" value="ECO:0000304"/>
    <property type="project" value="Reactome"/>
</dbReference>
<dbReference type="GO" id="GO:0016126">
    <property type="term" value="P:sterol biosynthetic process"/>
    <property type="evidence" value="ECO:0007669"/>
    <property type="project" value="UniProtKB-KW"/>
</dbReference>
<dbReference type="CDD" id="cd06183">
    <property type="entry name" value="cyt_b5_reduct_like"/>
    <property type="match status" value="1"/>
</dbReference>
<dbReference type="FunFam" id="2.40.30.10:FF:000021">
    <property type="entry name" value="NADH-cytochrome b5 reductase"/>
    <property type="match status" value="1"/>
</dbReference>
<dbReference type="FunFam" id="3.40.50.80:FF:000005">
    <property type="entry name" value="NADH-cytochrome b5 reductase"/>
    <property type="match status" value="1"/>
</dbReference>
<dbReference type="Gene3D" id="3.40.50.80">
    <property type="entry name" value="Nucleotide-binding domain of ferredoxin-NADP reductase (FNR) module"/>
    <property type="match status" value="1"/>
</dbReference>
<dbReference type="Gene3D" id="2.40.30.10">
    <property type="entry name" value="Translation factors"/>
    <property type="match status" value="1"/>
</dbReference>
<dbReference type="InterPro" id="IPR001834">
    <property type="entry name" value="CBR-like"/>
</dbReference>
<dbReference type="InterPro" id="IPR008333">
    <property type="entry name" value="Cbr1-like_FAD-bd_dom"/>
</dbReference>
<dbReference type="InterPro" id="IPR017927">
    <property type="entry name" value="FAD-bd_FR_type"/>
</dbReference>
<dbReference type="InterPro" id="IPR001709">
    <property type="entry name" value="Flavoprot_Pyr_Nucl_cyt_Rdtase"/>
</dbReference>
<dbReference type="InterPro" id="IPR039261">
    <property type="entry name" value="FNR_nucleotide-bd"/>
</dbReference>
<dbReference type="InterPro" id="IPR001433">
    <property type="entry name" value="OxRdtase_FAD/NAD-bd"/>
</dbReference>
<dbReference type="InterPro" id="IPR017938">
    <property type="entry name" value="Riboflavin_synthase-like_b-brl"/>
</dbReference>
<dbReference type="PANTHER" id="PTHR19370">
    <property type="entry name" value="NADH-CYTOCHROME B5 REDUCTASE"/>
    <property type="match status" value="1"/>
</dbReference>
<dbReference type="PANTHER" id="PTHR19370:SF74">
    <property type="entry name" value="NADH-CYTOCHROME B5 REDUCTASE 1"/>
    <property type="match status" value="1"/>
</dbReference>
<dbReference type="Pfam" id="PF00970">
    <property type="entry name" value="FAD_binding_6"/>
    <property type="match status" value="1"/>
</dbReference>
<dbReference type="Pfam" id="PF00175">
    <property type="entry name" value="NAD_binding_1"/>
    <property type="match status" value="1"/>
</dbReference>
<dbReference type="PRINTS" id="PR00406">
    <property type="entry name" value="CYTB5RDTASE"/>
</dbReference>
<dbReference type="PRINTS" id="PR00371">
    <property type="entry name" value="FPNCR"/>
</dbReference>
<dbReference type="SUPFAM" id="SSF52343">
    <property type="entry name" value="Ferredoxin reductase-like, C-terminal NADP-linked domain"/>
    <property type="match status" value="1"/>
</dbReference>
<dbReference type="SUPFAM" id="SSF63380">
    <property type="entry name" value="Riboflavin synthase domain-like"/>
    <property type="match status" value="1"/>
</dbReference>
<dbReference type="PROSITE" id="PS51384">
    <property type="entry name" value="FAD_FR"/>
    <property type="match status" value="1"/>
</dbReference>
<feature type="chain" id="PRO_0000287545" description="NADH-cytochrome b5 reductase 1">
    <location>
        <begin position="1"/>
        <end position="305"/>
    </location>
</feature>
<feature type="transmembrane region" description="Helical" evidence="2">
    <location>
        <begin position="8"/>
        <end position="28"/>
    </location>
</feature>
<feature type="domain" description="FAD-binding FR-type" evidence="3">
    <location>
        <begin position="44"/>
        <end position="156"/>
    </location>
</feature>
<feature type="binding site" evidence="1">
    <location>
        <begin position="136"/>
        <end position="166"/>
    </location>
    <ligand>
        <name>FAD</name>
        <dbReference type="ChEBI" id="CHEBI:57692"/>
    </ligand>
</feature>
<feature type="binding site" evidence="1">
    <location>
        <begin position="175"/>
        <end position="210"/>
    </location>
    <ligand>
        <name>FAD</name>
        <dbReference type="ChEBI" id="CHEBI:57692"/>
    </ligand>
</feature>
<feature type="sequence variant" id="VAR_032320" description="In dbSNP:rs2232842.">
    <original>N</original>
    <variation>S</variation>
    <location>
        <position position="44"/>
    </location>
</feature>
<feature type="sequence conflict" description="In Ref. 7; BAD97136." evidence="5" ref="7">
    <original>H</original>
    <variation>R</variation>
    <location>
        <position position="82"/>
    </location>
</feature>
<feature type="sequence conflict" description="In Ref. 1; AAF06147." evidence="5" ref="1">
    <original>S</original>
    <variation>N</variation>
    <location>
        <position position="92"/>
    </location>
</feature>
<feature type="sequence conflict" description="In Ref. 1; AAF06147." evidence="5" ref="1">
    <original>D</original>
    <variation>H</variation>
    <location>
        <position position="142"/>
    </location>
</feature>
<feature type="sequence conflict" description="In Ref. 5; BAC11115." evidence="5" ref="5">
    <original>F</original>
    <variation>S</variation>
    <location>
        <position position="212"/>
    </location>
</feature>
<keyword id="KW-0903">Direct protein sequencing</keyword>
<keyword id="KW-0274">FAD</keyword>
<keyword id="KW-0285">Flavoprotein</keyword>
<keyword id="KW-0444">Lipid biosynthesis</keyword>
<keyword id="KW-0443">Lipid metabolism</keyword>
<keyword id="KW-0472">Membrane</keyword>
<keyword id="KW-0520">NAD</keyword>
<keyword id="KW-0560">Oxidoreductase</keyword>
<keyword id="KW-1267">Proteomics identification</keyword>
<keyword id="KW-1185">Reference proteome</keyword>
<keyword id="KW-0752">Steroid biosynthesis</keyword>
<keyword id="KW-0753">Steroid metabolism</keyword>
<keyword id="KW-0756">Sterol biosynthesis</keyword>
<keyword id="KW-1207">Sterol metabolism</keyword>
<keyword id="KW-0812">Transmembrane</keyword>
<keyword id="KW-1133">Transmembrane helix</keyword>
<sequence length="305" mass="34095">MGIQTSPVLLASLGVGLVTLLGLAVGSYLVRRSRRPQVTLLDPNEKYLLRLLDKTTVSHNTKRFRFALPTAHHTLGLPVGKHIYLSTRIDGSLVIRPYTPVTSDEDQGYVDLVIKVYLKGVHPKFPEGGKMSQYLDSLKVGDVVEFRGPSGLLTYTGKGHFNIQPNKKSPPEPRVAKKLGMIAGGTGITPMLQLIRAILKVPEDPTQCFLLFANQTEKDIILREDLEELQARYPNRFKLWFTLDHPPKDWAYSKGFVTADMIREHLPAPGDDVLVLLCGPPPMVQLACHPNLDKLGYSQKMRFTY</sequence>
<comment type="function">
    <text evidence="1">NADH-cytochrome b5 reductases are involved in desaturation and elongation of fatty acids, cholesterol biosynthesis, drug metabolism, and, in erythrocyte, methemoglobin reduction.</text>
</comment>
<comment type="catalytic activity">
    <reaction>
        <text>2 Fe(III)-[cytochrome b5] + NADH = 2 Fe(II)-[cytochrome b5] + NAD(+) + H(+)</text>
        <dbReference type="Rhea" id="RHEA:46680"/>
        <dbReference type="Rhea" id="RHEA-COMP:10438"/>
        <dbReference type="Rhea" id="RHEA-COMP:10439"/>
        <dbReference type="ChEBI" id="CHEBI:15378"/>
        <dbReference type="ChEBI" id="CHEBI:29033"/>
        <dbReference type="ChEBI" id="CHEBI:29034"/>
        <dbReference type="ChEBI" id="CHEBI:57540"/>
        <dbReference type="ChEBI" id="CHEBI:57945"/>
        <dbReference type="EC" id="1.6.2.2"/>
    </reaction>
</comment>
<comment type="cofactor">
    <cofactor evidence="1">
        <name>FAD</name>
        <dbReference type="ChEBI" id="CHEBI:57692"/>
    </cofactor>
</comment>
<comment type="interaction">
    <interactant intactId="EBI-953870">
        <id>Q9UHQ9</id>
    </interactant>
    <interactant intactId="EBI-12809676">
        <id>A8MV81</id>
        <label>HIGD1C</label>
    </interactant>
    <organismsDiffer>false</organismsDiffer>
    <experiments>3</experiments>
</comment>
<comment type="interaction">
    <interactant intactId="EBI-953870">
        <id>Q9UHQ9</id>
    </interactant>
    <interactant intactId="EBI-347996">
        <id>O43765</id>
        <label>SGTA</label>
    </interactant>
    <organismsDiffer>false</organismsDiffer>
    <experiments>3</experiments>
</comment>
<comment type="interaction">
    <interactant intactId="EBI-953870">
        <id>Q9UHQ9</id>
    </interactant>
    <interactant intactId="EBI-744081">
        <id>Q96EQ0</id>
        <label>SGTB</label>
    </interactant>
    <organismsDiffer>false</organismsDiffer>
    <experiments>3</experiments>
</comment>
<comment type="interaction">
    <interactant intactId="EBI-953870">
        <id>Q9UHQ9</id>
    </interactant>
    <interactant intactId="EBI-12266756">
        <id>Q86UW2</id>
        <label>SLC51B</label>
    </interactant>
    <organismsDiffer>false</organismsDiffer>
    <experiments>3</experiments>
</comment>
<comment type="interaction">
    <interactant intactId="EBI-953870">
        <id>Q9UHQ9</id>
    </interactant>
    <interactant intactId="EBI-742074">
        <id>Q99614</id>
        <label>TTC1</label>
    </interactant>
    <organismsDiffer>false</organismsDiffer>
    <experiments>3</experiments>
</comment>
<comment type="interaction">
    <interactant intactId="EBI-953870">
        <id>Q9UHQ9</id>
    </interactant>
    <interactant intactId="EBI-741480">
        <id>Q9UMX0</id>
        <label>UBQLN1</label>
    </interactant>
    <organismsDiffer>false</organismsDiffer>
    <experiments>3</experiments>
</comment>
<comment type="interaction">
    <interactant intactId="EBI-953870">
        <id>Q9UHQ9</id>
    </interactant>
    <interactant intactId="EBI-10173939">
        <id>Q9UMX0-2</id>
        <label>UBQLN1</label>
    </interactant>
    <organismsDiffer>false</organismsDiffer>
    <experiments>3</experiments>
</comment>
<comment type="subcellular location">
    <subcellularLocation>
        <location evidence="5">Membrane</location>
        <topology evidence="5">Single-pass membrane protein</topology>
    </subcellularLocation>
</comment>
<comment type="tissue specificity">
    <text evidence="4">Widely expressed.</text>
</comment>
<comment type="similarity">
    <text evidence="5">Belongs to the flavoprotein pyridine nucleotide cytochrome reductase family.</text>
</comment>
<comment type="sequence caution" evidence="5">
    <conflict type="erroneous initiation">
        <sequence resource="EMBL-CDS" id="AAC72953"/>
    </conflict>
</comment>
<comment type="sequence caution" evidence="5">
    <conflict type="erroneous initiation">
        <sequence resource="EMBL-CDS" id="AAI27946"/>
    </conflict>
</comment>
<gene>
    <name type="primary">CYB5R1</name>
    <name type="synonym">NQO3A2</name>
    <name type="ORF">UNQ3049/PRO9865</name>
</gene>